<gene>
    <name type="primary">LAC21</name>
    <name type="ordered locus">Os11g0696900</name>
    <name type="ordered locus">LOC_Os11g47390</name>
</gene>
<organism>
    <name type="scientific">Oryza sativa subsp. japonica</name>
    <name type="common">Rice</name>
    <dbReference type="NCBI Taxonomy" id="39947"/>
    <lineage>
        <taxon>Eukaryota</taxon>
        <taxon>Viridiplantae</taxon>
        <taxon>Streptophyta</taxon>
        <taxon>Embryophyta</taxon>
        <taxon>Tracheophyta</taxon>
        <taxon>Spermatophyta</taxon>
        <taxon>Magnoliopsida</taxon>
        <taxon>Liliopsida</taxon>
        <taxon>Poales</taxon>
        <taxon>Poaceae</taxon>
        <taxon>BOP clade</taxon>
        <taxon>Oryzoideae</taxon>
        <taxon>Oryzeae</taxon>
        <taxon>Oryzinae</taxon>
        <taxon>Oryza</taxon>
        <taxon>Oryza sativa</taxon>
    </lineage>
</organism>
<dbReference type="EC" id="1.10.3.2"/>
<dbReference type="EMBL" id="DP000010">
    <property type="protein sequence ID" value="ABA95555.1"/>
    <property type="molecule type" value="Genomic_DNA"/>
</dbReference>
<dbReference type="EMBL" id="AP008217">
    <property type="protein sequence ID" value="BAF28876.2"/>
    <property type="status" value="ALT_SEQ"/>
    <property type="molecule type" value="Genomic_DNA"/>
</dbReference>
<dbReference type="EMBL" id="AP014967">
    <property type="protein sequence ID" value="BAT15353.1"/>
    <property type="molecule type" value="Genomic_DNA"/>
</dbReference>
<dbReference type="EMBL" id="AK241130">
    <property type="protein sequence ID" value="BAH00960.1"/>
    <property type="molecule type" value="mRNA"/>
</dbReference>
<dbReference type="RefSeq" id="XP_015615527.1">
    <property type="nucleotide sequence ID" value="XM_015760041.1"/>
</dbReference>
<dbReference type="SMR" id="Q2QZ80"/>
<dbReference type="STRING" id="39947.Q2QZ80"/>
<dbReference type="GlyCosmos" id="Q2QZ80">
    <property type="glycosylation" value="8 sites, No reported glycans"/>
</dbReference>
<dbReference type="PaxDb" id="39947-Q2QZ80"/>
<dbReference type="EnsemblPlants" id="Os11t0696900-01">
    <property type="protein sequence ID" value="Os11t0696900-01"/>
    <property type="gene ID" value="Os11g0696900"/>
</dbReference>
<dbReference type="Gramene" id="Os11t0696900-01">
    <property type="protein sequence ID" value="Os11t0696900-01"/>
    <property type="gene ID" value="Os11g0696900"/>
</dbReference>
<dbReference type="KEGG" id="dosa:Os11g0696900"/>
<dbReference type="eggNOG" id="KOG1263">
    <property type="taxonomic scope" value="Eukaryota"/>
</dbReference>
<dbReference type="HOGENOM" id="CLU_006504_6_3_1"/>
<dbReference type="InParanoid" id="Q2QZ80"/>
<dbReference type="OMA" id="PIWRDVV"/>
<dbReference type="OrthoDB" id="2121828at2759"/>
<dbReference type="Proteomes" id="UP000000763">
    <property type="component" value="Chromosome 11"/>
</dbReference>
<dbReference type="Proteomes" id="UP000059680">
    <property type="component" value="Chromosome 11"/>
</dbReference>
<dbReference type="GO" id="GO:0048046">
    <property type="term" value="C:apoplast"/>
    <property type="evidence" value="ECO:0007669"/>
    <property type="project" value="UniProtKB-SubCell"/>
</dbReference>
<dbReference type="GO" id="GO:0005507">
    <property type="term" value="F:copper ion binding"/>
    <property type="evidence" value="ECO:0007669"/>
    <property type="project" value="InterPro"/>
</dbReference>
<dbReference type="GO" id="GO:0052716">
    <property type="term" value="F:hydroquinone:oxygen oxidoreductase activity"/>
    <property type="evidence" value="ECO:0007669"/>
    <property type="project" value="UniProtKB-EC"/>
</dbReference>
<dbReference type="GO" id="GO:0016491">
    <property type="term" value="F:oxidoreductase activity"/>
    <property type="evidence" value="ECO:0000318"/>
    <property type="project" value="GO_Central"/>
</dbReference>
<dbReference type="GO" id="GO:0046274">
    <property type="term" value="P:lignin catabolic process"/>
    <property type="evidence" value="ECO:0007669"/>
    <property type="project" value="UniProtKB-KW"/>
</dbReference>
<dbReference type="CDD" id="cd13849">
    <property type="entry name" value="CuRO_1_LCC_plant"/>
    <property type="match status" value="1"/>
</dbReference>
<dbReference type="CDD" id="cd13875">
    <property type="entry name" value="CuRO_2_LCC_plant"/>
    <property type="match status" value="1"/>
</dbReference>
<dbReference type="CDD" id="cd13897">
    <property type="entry name" value="CuRO_3_LCC_plant"/>
    <property type="match status" value="1"/>
</dbReference>
<dbReference type="Gene3D" id="2.60.40.420">
    <property type="entry name" value="Cupredoxins - blue copper proteins"/>
    <property type="match status" value="3"/>
</dbReference>
<dbReference type="InterPro" id="IPR011707">
    <property type="entry name" value="Cu-oxidase-like_N"/>
</dbReference>
<dbReference type="InterPro" id="IPR001117">
    <property type="entry name" value="Cu-oxidase_2nd"/>
</dbReference>
<dbReference type="InterPro" id="IPR011706">
    <property type="entry name" value="Cu-oxidase_C"/>
</dbReference>
<dbReference type="InterPro" id="IPR045087">
    <property type="entry name" value="Cu-oxidase_fam"/>
</dbReference>
<dbReference type="InterPro" id="IPR033138">
    <property type="entry name" value="Cu_oxidase_CS"/>
</dbReference>
<dbReference type="InterPro" id="IPR002355">
    <property type="entry name" value="Cu_oxidase_Cu_BS"/>
</dbReference>
<dbReference type="InterPro" id="IPR008972">
    <property type="entry name" value="Cupredoxin"/>
</dbReference>
<dbReference type="InterPro" id="IPR034288">
    <property type="entry name" value="CuRO_1_LCC"/>
</dbReference>
<dbReference type="InterPro" id="IPR034285">
    <property type="entry name" value="CuRO_2_LCC"/>
</dbReference>
<dbReference type="InterPro" id="IPR034289">
    <property type="entry name" value="CuRO_3_LCC"/>
</dbReference>
<dbReference type="InterPro" id="IPR017761">
    <property type="entry name" value="Laccase"/>
</dbReference>
<dbReference type="NCBIfam" id="TIGR03389">
    <property type="entry name" value="laccase"/>
    <property type="match status" value="1"/>
</dbReference>
<dbReference type="PANTHER" id="PTHR11709:SF262">
    <property type="entry name" value="LACCASE-14"/>
    <property type="match status" value="1"/>
</dbReference>
<dbReference type="PANTHER" id="PTHR11709">
    <property type="entry name" value="MULTI-COPPER OXIDASE"/>
    <property type="match status" value="1"/>
</dbReference>
<dbReference type="Pfam" id="PF00394">
    <property type="entry name" value="Cu-oxidase"/>
    <property type="match status" value="1"/>
</dbReference>
<dbReference type="Pfam" id="PF07731">
    <property type="entry name" value="Cu-oxidase_2"/>
    <property type="match status" value="1"/>
</dbReference>
<dbReference type="Pfam" id="PF07732">
    <property type="entry name" value="Cu-oxidase_3"/>
    <property type="match status" value="1"/>
</dbReference>
<dbReference type="SUPFAM" id="SSF49503">
    <property type="entry name" value="Cupredoxins"/>
    <property type="match status" value="3"/>
</dbReference>
<dbReference type="PROSITE" id="PS00079">
    <property type="entry name" value="MULTICOPPER_OXIDASE1"/>
    <property type="match status" value="1"/>
</dbReference>
<dbReference type="PROSITE" id="PS00080">
    <property type="entry name" value="MULTICOPPER_OXIDASE2"/>
    <property type="match status" value="1"/>
</dbReference>
<feature type="signal peptide" evidence="2">
    <location>
        <begin position="1"/>
        <end position="29"/>
    </location>
</feature>
<feature type="chain" id="PRO_0000291908" description="Laccase-21">
    <location>
        <begin position="30"/>
        <end position="583"/>
    </location>
</feature>
<feature type="domain" description="Plastocyanin-like 1">
    <location>
        <begin position="39"/>
        <end position="155"/>
    </location>
</feature>
<feature type="domain" description="Plastocyanin-like 2">
    <location>
        <begin position="165"/>
        <end position="323"/>
    </location>
</feature>
<feature type="domain" description="Plastocyanin-like 3">
    <location>
        <begin position="436"/>
        <end position="567"/>
    </location>
</feature>
<feature type="binding site" evidence="1">
    <location>
        <position position="89"/>
    </location>
    <ligand>
        <name>Cu cation</name>
        <dbReference type="ChEBI" id="CHEBI:23378"/>
        <label>1</label>
    </ligand>
</feature>
<feature type="binding site" evidence="1">
    <location>
        <position position="91"/>
    </location>
    <ligand>
        <name>Cu cation</name>
        <dbReference type="ChEBI" id="CHEBI:23378"/>
        <label>2</label>
    </ligand>
</feature>
<feature type="binding site" evidence="1">
    <location>
        <position position="134"/>
    </location>
    <ligand>
        <name>Cu cation</name>
        <dbReference type="ChEBI" id="CHEBI:23378"/>
        <label>2</label>
    </ligand>
</feature>
<feature type="binding site" evidence="1">
    <location>
        <position position="136"/>
    </location>
    <ligand>
        <name>Cu cation</name>
        <dbReference type="ChEBI" id="CHEBI:23378"/>
        <label>3</label>
    </ligand>
</feature>
<feature type="binding site" evidence="1">
    <location>
        <position position="484"/>
    </location>
    <ligand>
        <name>Cu cation</name>
        <dbReference type="ChEBI" id="CHEBI:23378"/>
        <label>4</label>
    </ligand>
</feature>
<feature type="binding site" evidence="1">
    <location>
        <position position="487"/>
    </location>
    <ligand>
        <name>Cu cation</name>
        <dbReference type="ChEBI" id="CHEBI:23378"/>
        <label>1</label>
    </ligand>
</feature>
<feature type="binding site" evidence="1">
    <location>
        <position position="489"/>
    </location>
    <ligand>
        <name>Cu cation</name>
        <dbReference type="ChEBI" id="CHEBI:23378"/>
        <label>3</label>
    </ligand>
</feature>
<feature type="binding site" evidence="1">
    <location>
        <position position="546"/>
    </location>
    <ligand>
        <name>Cu cation</name>
        <dbReference type="ChEBI" id="CHEBI:23378"/>
        <label>3</label>
    </ligand>
</feature>
<feature type="binding site" evidence="1">
    <location>
        <position position="547"/>
    </location>
    <ligand>
        <name>Cu cation</name>
        <dbReference type="ChEBI" id="CHEBI:23378"/>
        <label>4</label>
    </ligand>
</feature>
<feature type="binding site" evidence="1">
    <location>
        <position position="548"/>
    </location>
    <ligand>
        <name>Cu cation</name>
        <dbReference type="ChEBI" id="CHEBI:23378"/>
        <label>2</label>
    </ligand>
</feature>
<feature type="binding site" evidence="1">
    <location>
        <position position="552"/>
    </location>
    <ligand>
        <name>Cu cation</name>
        <dbReference type="ChEBI" id="CHEBI:23378"/>
        <label>4</label>
    </ligand>
</feature>
<feature type="binding site" evidence="1">
    <location>
        <position position="557"/>
    </location>
    <ligand>
        <name>Cu cation</name>
        <dbReference type="ChEBI" id="CHEBI:23378"/>
        <label>4</label>
    </ligand>
</feature>
<feature type="glycosylation site" description="N-linked (GlcNAc...) asparagine" evidence="2">
    <location>
        <position position="85"/>
    </location>
</feature>
<feature type="glycosylation site" description="N-linked (GlcNAc...) asparagine" evidence="2">
    <location>
        <position position="282"/>
    </location>
</feature>
<feature type="glycosylation site" description="N-linked (GlcNAc...) asparagine" evidence="2">
    <location>
        <position position="311"/>
    </location>
</feature>
<feature type="glycosylation site" description="N-linked (GlcNAc...) asparagine" evidence="2">
    <location>
        <position position="384"/>
    </location>
</feature>
<feature type="glycosylation site" description="N-linked (GlcNAc...) asparagine" evidence="2">
    <location>
        <position position="387"/>
    </location>
</feature>
<feature type="glycosylation site" description="N-linked (GlcNAc...) asparagine" evidence="2">
    <location>
        <position position="399"/>
    </location>
</feature>
<feature type="glycosylation site" description="N-linked (GlcNAc...) asparagine" evidence="2">
    <location>
        <position position="409"/>
    </location>
</feature>
<feature type="glycosylation site" description="N-linked (GlcNAc...) asparagine" evidence="2">
    <location>
        <position position="446"/>
    </location>
</feature>
<comment type="function">
    <text evidence="1">Lignin degradation and detoxification of lignin-derived products.</text>
</comment>
<comment type="catalytic activity">
    <reaction>
        <text>4 hydroquinone + O2 = 4 benzosemiquinone + 2 H2O</text>
        <dbReference type="Rhea" id="RHEA:11276"/>
        <dbReference type="ChEBI" id="CHEBI:15377"/>
        <dbReference type="ChEBI" id="CHEBI:15379"/>
        <dbReference type="ChEBI" id="CHEBI:17594"/>
        <dbReference type="ChEBI" id="CHEBI:17977"/>
        <dbReference type="EC" id="1.10.3.2"/>
    </reaction>
</comment>
<comment type="cofactor">
    <cofactor evidence="1">
        <name>Cu cation</name>
        <dbReference type="ChEBI" id="CHEBI:23378"/>
    </cofactor>
    <text evidence="1">Binds 4 Cu cations per monomer.</text>
</comment>
<comment type="subcellular location">
    <subcellularLocation>
        <location evidence="3">Secreted</location>
        <location evidence="3">Extracellular space</location>
        <location evidence="3">Apoplast</location>
    </subcellularLocation>
</comment>
<comment type="similarity">
    <text evidence="3">Belongs to the multicopper oxidase family.</text>
</comment>
<comment type="sequence caution" evidence="3">
    <conflict type="erroneous gene model prediction">
        <sequence resource="EMBL-CDS" id="BAF28876"/>
    </conflict>
</comment>
<protein>
    <recommendedName>
        <fullName>Laccase-21</fullName>
        <ecNumber>1.10.3.2</ecNumber>
    </recommendedName>
    <alternativeName>
        <fullName>Benzenediol:oxygen oxidoreductase 21</fullName>
    </alternativeName>
    <alternativeName>
        <fullName>Diphenol oxidase 21</fullName>
    </alternativeName>
    <alternativeName>
        <fullName>Urishiol oxidase 21</fullName>
    </alternativeName>
</protein>
<evidence type="ECO:0000250" key="1"/>
<evidence type="ECO:0000255" key="2"/>
<evidence type="ECO:0000305" key="3"/>
<reference key="1">
    <citation type="journal article" date="2005" name="BMC Biol.">
        <title>The sequence of rice chromosomes 11 and 12, rich in disease resistance genes and recent gene duplications.</title>
        <authorList>
            <consortium name="The rice chromosomes 11 and 12 sequencing consortia"/>
        </authorList>
    </citation>
    <scope>NUCLEOTIDE SEQUENCE [LARGE SCALE GENOMIC DNA]</scope>
    <source>
        <strain>cv. Nipponbare</strain>
    </source>
</reference>
<reference key="2">
    <citation type="journal article" date="2005" name="Nature">
        <title>The map-based sequence of the rice genome.</title>
        <authorList>
            <consortium name="International rice genome sequencing project (IRGSP)"/>
        </authorList>
    </citation>
    <scope>NUCLEOTIDE SEQUENCE [LARGE SCALE GENOMIC DNA]</scope>
    <source>
        <strain>cv. Nipponbare</strain>
    </source>
</reference>
<reference key="3">
    <citation type="journal article" date="2008" name="Nucleic Acids Res.">
        <title>The rice annotation project database (RAP-DB): 2008 update.</title>
        <authorList>
            <consortium name="The rice annotation project (RAP)"/>
        </authorList>
    </citation>
    <scope>GENOME REANNOTATION</scope>
    <source>
        <strain>cv. Nipponbare</strain>
    </source>
</reference>
<reference key="4">
    <citation type="journal article" date="2013" name="Rice">
        <title>Improvement of the Oryza sativa Nipponbare reference genome using next generation sequence and optical map data.</title>
        <authorList>
            <person name="Kawahara Y."/>
            <person name="de la Bastide M."/>
            <person name="Hamilton J.P."/>
            <person name="Kanamori H."/>
            <person name="McCombie W.R."/>
            <person name="Ouyang S."/>
            <person name="Schwartz D.C."/>
            <person name="Tanaka T."/>
            <person name="Wu J."/>
            <person name="Zhou S."/>
            <person name="Childs K.L."/>
            <person name="Davidson R.M."/>
            <person name="Lin H."/>
            <person name="Quesada-Ocampo L."/>
            <person name="Vaillancourt B."/>
            <person name="Sakai H."/>
            <person name="Lee S.S."/>
            <person name="Kim J."/>
            <person name="Numa H."/>
            <person name="Itoh T."/>
            <person name="Buell C.R."/>
            <person name="Matsumoto T."/>
        </authorList>
    </citation>
    <scope>GENOME REANNOTATION</scope>
    <source>
        <strain>cv. Nipponbare</strain>
    </source>
</reference>
<reference key="5">
    <citation type="submission" date="2006-10" db="EMBL/GenBank/DDBJ databases">
        <title>Oryza sativa full length cDNA.</title>
        <authorList>
            <consortium name="The rice full-length cDNA consortium"/>
        </authorList>
    </citation>
    <scope>NUCLEOTIDE SEQUENCE [LARGE SCALE MRNA]</scope>
    <source>
        <strain>cv. Nipponbare</strain>
    </source>
</reference>
<name>LAC21_ORYSJ</name>
<proteinExistence type="evidence at transcript level"/>
<keyword id="KW-0052">Apoplast</keyword>
<keyword id="KW-0186">Copper</keyword>
<keyword id="KW-0325">Glycoprotein</keyword>
<keyword id="KW-0439">Lignin degradation</keyword>
<keyword id="KW-0479">Metal-binding</keyword>
<keyword id="KW-0560">Oxidoreductase</keyword>
<keyword id="KW-1185">Reference proteome</keyword>
<keyword id="KW-0677">Repeat</keyword>
<keyword id="KW-0964">Secreted</keyword>
<keyword id="KW-0732">Signal</keyword>
<accession>Q2QZ80</accession>
<accession>A0A0P0Y5P2</accession>
<accession>B7F8L2</accession>
<sequence>MGIAKIPAVLWLLACAVLTFAVAISPAHGGRTRRHYDFFITETNYRRLCHEKSVLTVNGQFPGPTIYARKGDLVIVNVYNHGNKNITIHWHGVDQPRNPWSDGPEFITQCPIRPDGKFTYQVIMSEEEGTLWWHAHSDFDRATVLGAIVVHPKHGDTFPFKRPDKEIPIILGEWWKNDVNHLLEEMKRIGEDVKPSDANTINGQPGDMFPCSRDDTFKVAVEHGNTYLLQVINAGLTNDMFFAVSGHRLTVVGIDARYTKPLTVEYIMIAPGQTMDLLLEANRSLGSKSNSRYYMAARTFITLPVPIPFNNSTATAVVEYYTGDSGAGPPDFPAVLPSLDDVDAAMAFLRQLRSLGSKDHPVHVPTHVDEHMLIDLAINFLPCNATNATDTACKGPKGNTTRFAASLNNVSFVSPAIDVLHAYYYGSGRGVYEDDFPNNPAPVFVNLTGDNDRPGVTKHGAKVKVLEYGTVVEVVFQDTSFESHPMHLHGFAFYVVGLGSGKFDDRRDPATYNLLDPPYQSTVSVPKAGWAAIRFRADNPGVWFMHCHFDRHMVWGMNTVFIVKDGKTPQAQMLPRPPNMPKC</sequence>